<feature type="chain" id="PRO_0000351564" description="(4S)-4-hydroxy-5-phosphonooxypentane-2,3-dione isomerase">
    <location>
        <begin position="1"/>
        <end position="96"/>
    </location>
</feature>
<feature type="domain" description="ABM" evidence="1">
    <location>
        <begin position="2"/>
        <end position="91"/>
    </location>
</feature>
<dbReference type="EC" id="5.3.1.32" evidence="1"/>
<dbReference type="EMBL" id="CP000948">
    <property type="protein sequence ID" value="ACB02728.1"/>
    <property type="molecule type" value="Genomic_DNA"/>
</dbReference>
<dbReference type="RefSeq" id="WP_000558527.1">
    <property type="nucleotide sequence ID" value="NC_010473.1"/>
</dbReference>
<dbReference type="SMR" id="B1XEA6"/>
<dbReference type="GeneID" id="75057398"/>
<dbReference type="KEGG" id="ecd:ECDH10B_1649"/>
<dbReference type="HOGENOM" id="CLU_131496_3_0_6"/>
<dbReference type="GO" id="GO:0005829">
    <property type="term" value="C:cytosol"/>
    <property type="evidence" value="ECO:0007669"/>
    <property type="project" value="TreeGrafter"/>
</dbReference>
<dbReference type="GO" id="GO:0002952">
    <property type="term" value="F:(4S)-4-hydroxy-5-phosphonooxypentane-2,3-dione isomerase activity"/>
    <property type="evidence" value="ECO:0007669"/>
    <property type="project" value="UniProtKB-EC"/>
</dbReference>
<dbReference type="GO" id="GO:0016491">
    <property type="term" value="F:oxidoreductase activity"/>
    <property type="evidence" value="ECO:0007669"/>
    <property type="project" value="TreeGrafter"/>
</dbReference>
<dbReference type="FunFam" id="3.30.70.100:FF:000016">
    <property type="entry name" value="(4S)-4-hydroxy-5-phosphonooxypentane-2,3-dione isomerase"/>
    <property type="match status" value="1"/>
</dbReference>
<dbReference type="Gene3D" id="3.30.70.100">
    <property type="match status" value="1"/>
</dbReference>
<dbReference type="HAMAP" id="MF_02051">
    <property type="entry name" value="LsrG"/>
    <property type="match status" value="1"/>
</dbReference>
<dbReference type="InterPro" id="IPR007138">
    <property type="entry name" value="ABM_dom"/>
</dbReference>
<dbReference type="InterPro" id="IPR050744">
    <property type="entry name" value="AI-2_Isomerase_LsrG"/>
</dbReference>
<dbReference type="InterPro" id="IPR011008">
    <property type="entry name" value="Dimeric_a/b-barrel"/>
</dbReference>
<dbReference type="InterPro" id="IPR033672">
    <property type="entry name" value="LsrG"/>
</dbReference>
<dbReference type="NCBIfam" id="NF007791">
    <property type="entry name" value="PRK10486.1"/>
    <property type="match status" value="1"/>
</dbReference>
<dbReference type="PANTHER" id="PTHR33336:SF1">
    <property type="entry name" value="(4S)-4-HYDROXY-5-PHOSPHONOOXYPENTANE-2,3-DIONE ISOMERASE"/>
    <property type="match status" value="1"/>
</dbReference>
<dbReference type="PANTHER" id="PTHR33336">
    <property type="entry name" value="QUINOL MONOOXYGENASE YGIN-RELATED"/>
    <property type="match status" value="1"/>
</dbReference>
<dbReference type="Pfam" id="PF03992">
    <property type="entry name" value="ABM"/>
    <property type="match status" value="1"/>
</dbReference>
<dbReference type="SUPFAM" id="SSF54909">
    <property type="entry name" value="Dimeric alpha+beta barrel"/>
    <property type="match status" value="1"/>
</dbReference>
<dbReference type="PROSITE" id="PS51725">
    <property type="entry name" value="ABM"/>
    <property type="match status" value="1"/>
</dbReference>
<name>LSRG_ECODH</name>
<reference key="1">
    <citation type="journal article" date="2008" name="J. Bacteriol.">
        <title>The complete genome sequence of Escherichia coli DH10B: insights into the biology of a laboratory workhorse.</title>
        <authorList>
            <person name="Durfee T."/>
            <person name="Nelson R."/>
            <person name="Baldwin S."/>
            <person name="Plunkett G. III"/>
            <person name="Burland V."/>
            <person name="Mau B."/>
            <person name="Petrosino J.F."/>
            <person name="Qin X."/>
            <person name="Muzny D.M."/>
            <person name="Ayele M."/>
            <person name="Gibbs R.A."/>
            <person name="Csorgo B."/>
            <person name="Posfai G."/>
            <person name="Weinstock G.M."/>
            <person name="Blattner F.R."/>
        </authorList>
    </citation>
    <scope>NUCLEOTIDE SEQUENCE [LARGE SCALE GENOMIC DNA]</scope>
    <source>
        <strain>K12 / DH10B</strain>
    </source>
</reference>
<gene>
    <name evidence="1" type="primary">lsrG</name>
    <name type="ordered locus">ECDH10B_1649</name>
</gene>
<evidence type="ECO:0000255" key="1">
    <source>
        <dbReference type="HAMAP-Rule" id="MF_02051"/>
    </source>
</evidence>
<protein>
    <recommendedName>
        <fullName evidence="1">(4S)-4-hydroxy-5-phosphonooxypentane-2,3-dione isomerase</fullName>
        <ecNumber evidence="1">5.3.1.32</ecNumber>
    </recommendedName>
    <alternativeName>
        <fullName evidence="1">Autoinducer 2-degrading protein LsrG</fullName>
        <shortName evidence="1">AI-2-degrading protein LsrG</shortName>
    </alternativeName>
    <alternativeName>
        <fullName evidence="1">Phospho-(S)-4,5-dihydroxy-2,3-pentanedione isomerase</fullName>
    </alternativeName>
    <alternativeName>
        <fullName evidence="1">Phospho-AI-2 isomerase</fullName>
    </alternativeName>
</protein>
<organism>
    <name type="scientific">Escherichia coli (strain K12 / DH10B)</name>
    <dbReference type="NCBI Taxonomy" id="316385"/>
    <lineage>
        <taxon>Bacteria</taxon>
        <taxon>Pseudomonadati</taxon>
        <taxon>Pseudomonadota</taxon>
        <taxon>Gammaproteobacteria</taxon>
        <taxon>Enterobacterales</taxon>
        <taxon>Enterobacteriaceae</taxon>
        <taxon>Escherichia</taxon>
    </lineage>
</organism>
<accession>B1XEA6</accession>
<sequence>MHVTLVEINVHEDKVDEFIEVFRQNHLGSVQEEGNLRFDVLQDPEVNSRFYIYEAYKDEDAVAFHKTTPHYKTCVAKLESLMTGPRKKRLFNGLMP</sequence>
<keyword id="KW-0963">Cytoplasm</keyword>
<keyword id="KW-0413">Isomerase</keyword>
<comment type="function">
    <text evidence="1">Involved in the degradation of phospho-AI-2, thereby terminating induction of the lsr operon and closing the AI-2 signaling cycle. Catalyzes the conversion of (4S)-4-hydroxy-5-phosphonooxypentane-2,3-dione (P-DPD) to 3-hydroxy-5-phosphonooxypentane-2,4-dione (P-HPD).</text>
</comment>
<comment type="catalytic activity">
    <reaction evidence="1">
        <text>(2S)-2-hydroxy-3,4-dioxopentyl phosphate = 3-hydroxy-2,4-dioxopentyl phosphate</text>
        <dbReference type="Rhea" id="RHEA:44360"/>
        <dbReference type="ChEBI" id="CHEBI:71677"/>
        <dbReference type="ChEBI" id="CHEBI:84359"/>
        <dbReference type="EC" id="5.3.1.32"/>
    </reaction>
</comment>
<comment type="subunit">
    <text evidence="1">Homodimer.</text>
</comment>
<comment type="subcellular location">
    <subcellularLocation>
        <location evidence="1">Cytoplasm</location>
    </subcellularLocation>
</comment>
<comment type="similarity">
    <text evidence="1">Belongs to the LsrG family.</text>
</comment>
<proteinExistence type="inferred from homology"/>